<accession>P81035</accession>
<organism>
    <name type="scientific">Cancer pagurus</name>
    <name type="common">Rock crab</name>
    <dbReference type="NCBI Taxonomy" id="6755"/>
    <lineage>
        <taxon>Eukaryota</taxon>
        <taxon>Metazoa</taxon>
        <taxon>Ecdysozoa</taxon>
        <taxon>Arthropoda</taxon>
        <taxon>Crustacea</taxon>
        <taxon>Multicrustacea</taxon>
        <taxon>Malacostraca</taxon>
        <taxon>Eumalacostraca</taxon>
        <taxon>Eucarida</taxon>
        <taxon>Decapoda</taxon>
        <taxon>Pleocyemata</taxon>
        <taxon>Brachyura</taxon>
        <taxon>Eubrachyura</taxon>
        <taxon>Cancroidea</taxon>
        <taxon>Cancridae</taxon>
        <taxon>Cancer</taxon>
    </lineage>
</organism>
<protein>
    <recommendedName>
        <fullName>Mandibular organ-inhibiting hormone 2</fullName>
        <shortName>MOIH-2</shortName>
    </recommendedName>
</protein>
<comment type="function">
    <text>Represses the synthesis of methyl farnesoate, the precursor of insect juvenile hormone III in the mandibular organ.</text>
</comment>
<comment type="subcellular location">
    <subcellularLocation>
        <location>Secreted</location>
    </subcellularLocation>
</comment>
<comment type="tissue specificity">
    <text>Produced by the medulla terminalis X-organ in the eyestalks and transported to the sinus gland where it is stored and released.</text>
</comment>
<comment type="similarity">
    <text evidence="2">Belongs to the arthropod CHH/MIH/GIH/VIH hormone family.</text>
</comment>
<proteinExistence type="evidence at protein level"/>
<keyword id="KW-0903">Direct protein sequencing</keyword>
<keyword id="KW-1015">Disulfide bond</keyword>
<keyword id="KW-0372">Hormone</keyword>
<keyword id="KW-0527">Neuropeptide</keyword>
<keyword id="KW-0964">Secreted</keyword>
<sequence>RRINNDCQNFIGNRAMYEKVDWICKDCANIFRQDGLLNNCRSNCFYNTEFLWCIDATENTRNKEQLEQWAAILGAGWN</sequence>
<name>MOIH2_CANPG</name>
<dbReference type="SMR" id="P81035"/>
<dbReference type="GO" id="GO:0005576">
    <property type="term" value="C:extracellular region"/>
    <property type="evidence" value="ECO:0007669"/>
    <property type="project" value="UniProtKB-SubCell"/>
</dbReference>
<dbReference type="GO" id="GO:0005184">
    <property type="term" value="F:neuropeptide hormone activity"/>
    <property type="evidence" value="ECO:0007669"/>
    <property type="project" value="InterPro"/>
</dbReference>
<dbReference type="GO" id="GO:0007623">
    <property type="term" value="P:circadian rhythm"/>
    <property type="evidence" value="ECO:0007669"/>
    <property type="project" value="TreeGrafter"/>
</dbReference>
<dbReference type="GO" id="GO:0007218">
    <property type="term" value="P:neuropeptide signaling pathway"/>
    <property type="evidence" value="ECO:0007669"/>
    <property type="project" value="UniProtKB-KW"/>
</dbReference>
<dbReference type="Gene3D" id="1.10.2010.10">
    <property type="entry name" value="Crustacean CHH/MIH/GIH neurohormone"/>
    <property type="match status" value="1"/>
</dbReference>
<dbReference type="InterPro" id="IPR018251">
    <property type="entry name" value="Crust_neurhormone_CS"/>
</dbReference>
<dbReference type="InterPro" id="IPR031098">
    <property type="entry name" value="Crust_neurohorm"/>
</dbReference>
<dbReference type="InterPro" id="IPR035957">
    <property type="entry name" value="Crust_neurohorm_sf"/>
</dbReference>
<dbReference type="InterPro" id="IPR001166">
    <property type="entry name" value="Hyperglycemic"/>
</dbReference>
<dbReference type="InterPro" id="IPR001262">
    <property type="entry name" value="Hyperglycemic2"/>
</dbReference>
<dbReference type="PANTHER" id="PTHR35981">
    <property type="entry name" value="ION TRANSPORT PEPTIDE, ISOFORM C"/>
    <property type="match status" value="1"/>
</dbReference>
<dbReference type="PANTHER" id="PTHR35981:SF2">
    <property type="entry name" value="ION TRANSPORT PEPTIDE, ISOFORM C"/>
    <property type="match status" value="1"/>
</dbReference>
<dbReference type="Pfam" id="PF01147">
    <property type="entry name" value="Crust_neurohorm"/>
    <property type="match status" value="1"/>
</dbReference>
<dbReference type="PRINTS" id="PR00549">
    <property type="entry name" value="HYPRGLYCEMC2"/>
</dbReference>
<dbReference type="PRINTS" id="PR00550">
    <property type="entry name" value="HYPRGLYCEMIC"/>
</dbReference>
<dbReference type="SUPFAM" id="SSF81778">
    <property type="entry name" value="Crustacean CHH/MIH/GIH neurohormone"/>
    <property type="match status" value="1"/>
</dbReference>
<dbReference type="PROSITE" id="PS01250">
    <property type="entry name" value="CHH_MIH_GIH"/>
    <property type="match status" value="1"/>
</dbReference>
<feature type="chain" id="PRO_0000209867" description="Mandibular organ-inhibiting hormone 2">
    <location>
        <begin position="1"/>
        <end position="78"/>
    </location>
</feature>
<feature type="disulfide bond" evidence="1">
    <location>
        <begin position="7"/>
        <end position="44"/>
    </location>
</feature>
<feature type="disulfide bond" evidence="1">
    <location>
        <begin position="24"/>
        <end position="40"/>
    </location>
</feature>
<feature type="disulfide bond" evidence="1">
    <location>
        <begin position="27"/>
        <end position="53"/>
    </location>
</feature>
<reference key="1">
    <citation type="journal article" date="1996" name="J. Biol. Chem.">
        <title>Structure and significance of mandibular organ-inhibiting hormone in the crab, Cancer pagurus. Involvement in multihormonal regulation of growth and reproduction.</title>
        <authorList>
            <person name="Wainwright G."/>
            <person name="Webster S.G."/>
            <person name="Wilkinson M.C."/>
            <person name="Chung J.S."/>
            <person name="Rees H.H."/>
        </authorList>
    </citation>
    <scope>PROTEIN SEQUENCE</scope>
    <source>
        <tissue>Sinus gland</tissue>
    </source>
</reference>
<evidence type="ECO:0000250" key="1"/>
<evidence type="ECO:0000305" key="2"/>